<name>HSLO_BACC2</name>
<dbReference type="EMBL" id="CP001186">
    <property type="protein sequence ID" value="ACK96742.1"/>
    <property type="molecule type" value="Genomic_DNA"/>
</dbReference>
<dbReference type="RefSeq" id="WP_000656369.1">
    <property type="nucleotide sequence ID" value="NC_011772.1"/>
</dbReference>
<dbReference type="SMR" id="B7ISX7"/>
<dbReference type="KEGG" id="bcg:BCG9842_B5242"/>
<dbReference type="HOGENOM" id="CLU_054493_1_0_9"/>
<dbReference type="Proteomes" id="UP000006744">
    <property type="component" value="Chromosome"/>
</dbReference>
<dbReference type="GO" id="GO:0005737">
    <property type="term" value="C:cytoplasm"/>
    <property type="evidence" value="ECO:0007669"/>
    <property type="project" value="UniProtKB-SubCell"/>
</dbReference>
<dbReference type="GO" id="GO:0044183">
    <property type="term" value="F:protein folding chaperone"/>
    <property type="evidence" value="ECO:0007669"/>
    <property type="project" value="TreeGrafter"/>
</dbReference>
<dbReference type="GO" id="GO:0051082">
    <property type="term" value="F:unfolded protein binding"/>
    <property type="evidence" value="ECO:0007669"/>
    <property type="project" value="UniProtKB-UniRule"/>
</dbReference>
<dbReference type="GO" id="GO:0042026">
    <property type="term" value="P:protein refolding"/>
    <property type="evidence" value="ECO:0007669"/>
    <property type="project" value="TreeGrafter"/>
</dbReference>
<dbReference type="CDD" id="cd00498">
    <property type="entry name" value="Hsp33"/>
    <property type="match status" value="1"/>
</dbReference>
<dbReference type="Gene3D" id="3.55.30.10">
    <property type="entry name" value="Hsp33 domain"/>
    <property type="match status" value="1"/>
</dbReference>
<dbReference type="Gene3D" id="3.90.1280.10">
    <property type="entry name" value="HSP33 redox switch-like"/>
    <property type="match status" value="1"/>
</dbReference>
<dbReference type="HAMAP" id="MF_00117">
    <property type="entry name" value="HslO"/>
    <property type="match status" value="1"/>
</dbReference>
<dbReference type="InterPro" id="IPR000397">
    <property type="entry name" value="Heat_shock_Hsp33"/>
</dbReference>
<dbReference type="InterPro" id="IPR016154">
    <property type="entry name" value="Heat_shock_Hsp33_C"/>
</dbReference>
<dbReference type="InterPro" id="IPR016153">
    <property type="entry name" value="Heat_shock_Hsp33_N"/>
</dbReference>
<dbReference type="NCBIfam" id="NF001033">
    <property type="entry name" value="PRK00114.1"/>
    <property type="match status" value="1"/>
</dbReference>
<dbReference type="PANTHER" id="PTHR30111">
    <property type="entry name" value="33 KDA CHAPERONIN"/>
    <property type="match status" value="1"/>
</dbReference>
<dbReference type="PANTHER" id="PTHR30111:SF1">
    <property type="entry name" value="33 KDA CHAPERONIN"/>
    <property type="match status" value="1"/>
</dbReference>
<dbReference type="Pfam" id="PF01430">
    <property type="entry name" value="HSP33"/>
    <property type="match status" value="1"/>
</dbReference>
<dbReference type="PIRSF" id="PIRSF005261">
    <property type="entry name" value="Heat_shock_Hsp33"/>
    <property type="match status" value="1"/>
</dbReference>
<dbReference type="SUPFAM" id="SSF64397">
    <property type="entry name" value="Hsp33 domain"/>
    <property type="match status" value="1"/>
</dbReference>
<dbReference type="SUPFAM" id="SSF118352">
    <property type="entry name" value="HSP33 redox switch-like"/>
    <property type="match status" value="1"/>
</dbReference>
<keyword id="KW-0143">Chaperone</keyword>
<keyword id="KW-0963">Cytoplasm</keyword>
<keyword id="KW-1015">Disulfide bond</keyword>
<keyword id="KW-0676">Redox-active center</keyword>
<keyword id="KW-0862">Zinc</keyword>
<gene>
    <name evidence="1" type="primary">hslO</name>
    <name type="ordered locus">BCG9842_B5242</name>
</gene>
<protein>
    <recommendedName>
        <fullName evidence="1">33 kDa chaperonin</fullName>
    </recommendedName>
    <alternativeName>
        <fullName evidence="1">Heat shock protein 33 homolog</fullName>
        <shortName evidence="1">HSP33</shortName>
    </alternativeName>
</protein>
<reference key="1">
    <citation type="submission" date="2008-10" db="EMBL/GenBank/DDBJ databases">
        <title>Genome sequence of Bacillus cereus G9842.</title>
        <authorList>
            <person name="Dodson R.J."/>
            <person name="Durkin A.S."/>
            <person name="Rosovitz M.J."/>
            <person name="Rasko D.A."/>
            <person name="Hoffmaster A."/>
            <person name="Ravel J."/>
            <person name="Sutton G."/>
        </authorList>
    </citation>
    <scope>NUCLEOTIDE SEQUENCE [LARGE SCALE GENOMIC DNA]</scope>
    <source>
        <strain>G9842</strain>
    </source>
</reference>
<accession>B7ISX7</accession>
<proteinExistence type="inferred from homology"/>
<comment type="function">
    <text evidence="1">Redox regulated molecular chaperone. Protects both thermally unfolding and oxidatively damaged proteins from irreversible aggregation. Plays an important role in the bacterial defense system toward oxidative stress.</text>
</comment>
<comment type="subcellular location">
    <subcellularLocation>
        <location evidence="1">Cytoplasm</location>
    </subcellularLocation>
</comment>
<comment type="PTM">
    <text evidence="1">Under oxidizing conditions two disulfide bonds are formed involving the reactive cysteines. Under reducing conditions zinc is bound to the reactive cysteines and the protein is inactive.</text>
</comment>
<comment type="similarity">
    <text evidence="1">Belongs to the HSP33 family.</text>
</comment>
<sequence>MKDYLVKALAFDGEVRAYSVRTTNTVSEAQRRHDTWRTASAALGRSLTAGTMMGAMLKGDQKLTIKVEGNGPIGPILVDAHANGDVRGYVTNPHVDFEGTEQGKLRVYQAVGTEGFVTVIKDIGMREPFIGQSPIVSGELGEDFTYYFAVSEQTPSSVGVGVLVNGDDSVLAAGGFILQIMPGAQEETISFIEDRLQKIPPVSTLIERGLSPEELLYAVLGEDKVKVLETMDVQFNCTCSRERIESVLISLGKTELEQIREEEEETEVHCHFCNERYKFSKEDITNLIENL</sequence>
<feature type="chain" id="PRO_1000190455" description="33 kDa chaperonin">
    <location>
        <begin position="1"/>
        <end position="291"/>
    </location>
</feature>
<feature type="disulfide bond" description="Redox-active" evidence="1">
    <location>
        <begin position="237"/>
        <end position="239"/>
    </location>
</feature>
<feature type="disulfide bond" description="Redox-active" evidence="1">
    <location>
        <begin position="270"/>
        <end position="273"/>
    </location>
</feature>
<evidence type="ECO:0000255" key="1">
    <source>
        <dbReference type="HAMAP-Rule" id="MF_00117"/>
    </source>
</evidence>
<organism>
    <name type="scientific">Bacillus cereus (strain G9842)</name>
    <dbReference type="NCBI Taxonomy" id="405531"/>
    <lineage>
        <taxon>Bacteria</taxon>
        <taxon>Bacillati</taxon>
        <taxon>Bacillota</taxon>
        <taxon>Bacilli</taxon>
        <taxon>Bacillales</taxon>
        <taxon>Bacillaceae</taxon>
        <taxon>Bacillus</taxon>
        <taxon>Bacillus cereus group</taxon>
    </lineage>
</organism>